<sequence>MSGFFITATDTEVGKTVVAGALAGVFRELGYNIGVYKALQSGHVASNPEGDAARLKVLSGVPTKEDEICPYSIEEPLAPRLAMKRAGRAVTLKDIIHHYNERLKEFNSLFVEGAGGLAVPYTEDALVIDFAKELQLPLIVVARPTLGTVNHTVLTIAYAKANGLTVAGVILSGCKECEMERVQENKVMIEELSGVPVLGLLPFFEGEFTKEEVLESAKEYIMISKLEEFIRNESTVAHTSSN</sequence>
<reference key="1">
    <citation type="journal article" date="2006" name="J. Bacteriol.">
        <title>Pathogenomic sequence analysis of Bacillus cereus and Bacillus thuringiensis isolates closely related to Bacillus anthracis.</title>
        <authorList>
            <person name="Han C.S."/>
            <person name="Xie G."/>
            <person name="Challacombe J.F."/>
            <person name="Altherr M.R."/>
            <person name="Bhotika S.S."/>
            <person name="Bruce D."/>
            <person name="Campbell C.S."/>
            <person name="Campbell M.L."/>
            <person name="Chen J."/>
            <person name="Chertkov O."/>
            <person name="Cleland C."/>
            <person name="Dimitrijevic M."/>
            <person name="Doggett N.A."/>
            <person name="Fawcett J.J."/>
            <person name="Glavina T."/>
            <person name="Goodwin L.A."/>
            <person name="Hill K.K."/>
            <person name="Hitchcock P."/>
            <person name="Jackson P.J."/>
            <person name="Keim P."/>
            <person name="Kewalramani A.R."/>
            <person name="Longmire J."/>
            <person name="Lucas S."/>
            <person name="Malfatti S."/>
            <person name="McMurry K."/>
            <person name="Meincke L.J."/>
            <person name="Misra M."/>
            <person name="Moseman B.L."/>
            <person name="Mundt M."/>
            <person name="Munk A.C."/>
            <person name="Okinaka R.T."/>
            <person name="Parson-Quintana B."/>
            <person name="Reilly L.P."/>
            <person name="Richardson P."/>
            <person name="Robinson D.L."/>
            <person name="Rubin E."/>
            <person name="Saunders E."/>
            <person name="Tapia R."/>
            <person name="Tesmer J.G."/>
            <person name="Thayer N."/>
            <person name="Thompson L.S."/>
            <person name="Tice H."/>
            <person name="Ticknor L.O."/>
            <person name="Wills P.L."/>
            <person name="Brettin T.S."/>
            <person name="Gilna P."/>
        </authorList>
    </citation>
    <scope>NUCLEOTIDE SEQUENCE [LARGE SCALE GENOMIC DNA]</scope>
    <source>
        <strain>97-27</strain>
    </source>
</reference>
<evidence type="ECO:0000255" key="1">
    <source>
        <dbReference type="HAMAP-Rule" id="MF_00336"/>
    </source>
</evidence>
<keyword id="KW-0067">ATP-binding</keyword>
<keyword id="KW-0093">Biotin biosynthesis</keyword>
<keyword id="KW-0963">Cytoplasm</keyword>
<keyword id="KW-0436">Ligase</keyword>
<keyword id="KW-0460">Magnesium</keyword>
<keyword id="KW-0479">Metal-binding</keyword>
<keyword id="KW-0547">Nucleotide-binding</keyword>
<protein>
    <recommendedName>
        <fullName evidence="1">ATP-dependent dethiobiotin synthetase BioD</fullName>
        <ecNumber evidence="1">6.3.3.3</ecNumber>
    </recommendedName>
    <alternativeName>
        <fullName evidence="1">DTB synthetase</fullName>
        <shortName evidence="1">DTBS</shortName>
    </alternativeName>
    <alternativeName>
        <fullName evidence="1">Dethiobiotin synthase</fullName>
    </alternativeName>
</protein>
<gene>
    <name evidence="1" type="primary">bioD</name>
    <name type="ordered locus">BT9727_3860</name>
</gene>
<comment type="function">
    <text evidence="1">Catalyzes a mechanistically unusual reaction, the ATP-dependent insertion of CO2 between the N7 and N8 nitrogen atoms of 7,8-diaminopelargonic acid (DAPA, also called 7,8-diammoniononanoate) to form a ureido ring.</text>
</comment>
<comment type="catalytic activity">
    <reaction evidence="1">
        <text>(7R,8S)-7,8-diammoniononanoate + CO2 + ATP = (4R,5S)-dethiobiotin + ADP + phosphate + 3 H(+)</text>
        <dbReference type="Rhea" id="RHEA:15805"/>
        <dbReference type="ChEBI" id="CHEBI:15378"/>
        <dbReference type="ChEBI" id="CHEBI:16526"/>
        <dbReference type="ChEBI" id="CHEBI:30616"/>
        <dbReference type="ChEBI" id="CHEBI:43474"/>
        <dbReference type="ChEBI" id="CHEBI:149469"/>
        <dbReference type="ChEBI" id="CHEBI:149473"/>
        <dbReference type="ChEBI" id="CHEBI:456216"/>
        <dbReference type="EC" id="6.3.3.3"/>
    </reaction>
</comment>
<comment type="cofactor">
    <cofactor evidence="1">
        <name>Mg(2+)</name>
        <dbReference type="ChEBI" id="CHEBI:18420"/>
    </cofactor>
</comment>
<comment type="pathway">
    <text evidence="1">Cofactor biosynthesis; biotin biosynthesis; biotin from 7,8-diaminononanoate: step 1/2.</text>
</comment>
<comment type="subunit">
    <text evidence="1">Homodimer.</text>
</comment>
<comment type="subcellular location">
    <subcellularLocation>
        <location evidence="1">Cytoplasm</location>
    </subcellularLocation>
</comment>
<comment type="similarity">
    <text evidence="1">Belongs to the dethiobiotin synthetase family.</text>
</comment>
<proteinExistence type="inferred from homology"/>
<feature type="chain" id="PRO_0000302480" description="ATP-dependent dethiobiotin synthetase BioD">
    <location>
        <begin position="1"/>
        <end position="242"/>
    </location>
</feature>
<feature type="active site" evidence="1">
    <location>
        <position position="37"/>
    </location>
</feature>
<feature type="binding site" evidence="1">
    <location>
        <begin position="12"/>
        <end position="17"/>
    </location>
    <ligand>
        <name>ATP</name>
        <dbReference type="ChEBI" id="CHEBI:30616"/>
    </ligand>
</feature>
<feature type="binding site" evidence="1">
    <location>
        <position position="16"/>
    </location>
    <ligand>
        <name>Mg(2+)</name>
        <dbReference type="ChEBI" id="CHEBI:18420"/>
    </ligand>
</feature>
<feature type="binding site" evidence="1">
    <location>
        <position position="41"/>
    </location>
    <ligand>
        <name>substrate</name>
    </ligand>
</feature>
<feature type="binding site" evidence="1">
    <location>
        <position position="51"/>
    </location>
    <ligand>
        <name>ATP</name>
        <dbReference type="ChEBI" id="CHEBI:30616"/>
    </ligand>
</feature>
<feature type="binding site" evidence="1">
    <location>
        <position position="51"/>
    </location>
    <ligand>
        <name>Mg(2+)</name>
        <dbReference type="ChEBI" id="CHEBI:18420"/>
    </ligand>
</feature>
<feature type="binding site" evidence="1">
    <location>
        <begin position="112"/>
        <end position="115"/>
    </location>
    <ligand>
        <name>ATP</name>
        <dbReference type="ChEBI" id="CHEBI:30616"/>
    </ligand>
</feature>
<feature type="binding site" evidence="1">
    <location>
        <position position="112"/>
    </location>
    <ligand>
        <name>Mg(2+)</name>
        <dbReference type="ChEBI" id="CHEBI:18420"/>
    </ligand>
</feature>
<accession>Q6HE47</accession>
<organism>
    <name type="scientific">Bacillus thuringiensis subsp. konkukian (strain 97-27)</name>
    <dbReference type="NCBI Taxonomy" id="281309"/>
    <lineage>
        <taxon>Bacteria</taxon>
        <taxon>Bacillati</taxon>
        <taxon>Bacillota</taxon>
        <taxon>Bacilli</taxon>
        <taxon>Bacillales</taxon>
        <taxon>Bacillaceae</taxon>
        <taxon>Bacillus</taxon>
        <taxon>Bacillus cereus group</taxon>
    </lineage>
</organism>
<dbReference type="EC" id="6.3.3.3" evidence="1"/>
<dbReference type="EMBL" id="AE017355">
    <property type="protein sequence ID" value="AAT60741.1"/>
    <property type="molecule type" value="Genomic_DNA"/>
</dbReference>
<dbReference type="RefSeq" id="WP_000012485.1">
    <property type="nucleotide sequence ID" value="NC_005957.1"/>
</dbReference>
<dbReference type="RefSeq" id="YP_038179.1">
    <property type="nucleotide sequence ID" value="NC_005957.1"/>
</dbReference>
<dbReference type="SMR" id="Q6HE47"/>
<dbReference type="KEGG" id="btk:BT9727_3860"/>
<dbReference type="PATRIC" id="fig|281309.8.peg.4115"/>
<dbReference type="HOGENOM" id="CLU_072551_3_0_9"/>
<dbReference type="UniPathway" id="UPA00078">
    <property type="reaction ID" value="UER00161"/>
</dbReference>
<dbReference type="Proteomes" id="UP000001301">
    <property type="component" value="Chromosome"/>
</dbReference>
<dbReference type="GO" id="GO:0005829">
    <property type="term" value="C:cytosol"/>
    <property type="evidence" value="ECO:0007669"/>
    <property type="project" value="TreeGrafter"/>
</dbReference>
<dbReference type="GO" id="GO:0005524">
    <property type="term" value="F:ATP binding"/>
    <property type="evidence" value="ECO:0007669"/>
    <property type="project" value="UniProtKB-UniRule"/>
</dbReference>
<dbReference type="GO" id="GO:0004141">
    <property type="term" value="F:dethiobiotin synthase activity"/>
    <property type="evidence" value="ECO:0007669"/>
    <property type="project" value="UniProtKB-UniRule"/>
</dbReference>
<dbReference type="GO" id="GO:0000287">
    <property type="term" value="F:magnesium ion binding"/>
    <property type="evidence" value="ECO:0007669"/>
    <property type="project" value="UniProtKB-UniRule"/>
</dbReference>
<dbReference type="GO" id="GO:0009102">
    <property type="term" value="P:biotin biosynthetic process"/>
    <property type="evidence" value="ECO:0007669"/>
    <property type="project" value="UniProtKB-UniRule"/>
</dbReference>
<dbReference type="CDD" id="cd03109">
    <property type="entry name" value="DTBS"/>
    <property type="match status" value="1"/>
</dbReference>
<dbReference type="FunFam" id="3.40.50.300:FF:001212">
    <property type="entry name" value="ATP-dependent dethiobiotin synthetase BioD"/>
    <property type="match status" value="1"/>
</dbReference>
<dbReference type="Gene3D" id="3.40.50.300">
    <property type="entry name" value="P-loop containing nucleotide triphosphate hydrolases"/>
    <property type="match status" value="1"/>
</dbReference>
<dbReference type="HAMAP" id="MF_00336">
    <property type="entry name" value="BioD"/>
    <property type="match status" value="1"/>
</dbReference>
<dbReference type="InterPro" id="IPR004472">
    <property type="entry name" value="DTB_synth_BioD"/>
</dbReference>
<dbReference type="InterPro" id="IPR027417">
    <property type="entry name" value="P-loop_NTPase"/>
</dbReference>
<dbReference type="NCBIfam" id="TIGR00347">
    <property type="entry name" value="bioD"/>
    <property type="match status" value="1"/>
</dbReference>
<dbReference type="PANTHER" id="PTHR43210:SF2">
    <property type="entry name" value="ATP-DEPENDENT DETHIOBIOTIN SYNTHETASE BIOD 2"/>
    <property type="match status" value="1"/>
</dbReference>
<dbReference type="PANTHER" id="PTHR43210">
    <property type="entry name" value="DETHIOBIOTIN SYNTHETASE"/>
    <property type="match status" value="1"/>
</dbReference>
<dbReference type="Pfam" id="PF13500">
    <property type="entry name" value="AAA_26"/>
    <property type="match status" value="1"/>
</dbReference>
<dbReference type="PIRSF" id="PIRSF006755">
    <property type="entry name" value="DTB_synth"/>
    <property type="match status" value="1"/>
</dbReference>
<dbReference type="SUPFAM" id="SSF52540">
    <property type="entry name" value="P-loop containing nucleoside triphosphate hydrolases"/>
    <property type="match status" value="1"/>
</dbReference>
<name>BIOD_BACHK</name>